<evidence type="ECO:0000255" key="1">
    <source>
        <dbReference type="HAMAP-Rule" id="MF_00759"/>
    </source>
</evidence>
<organism>
    <name type="scientific">Salmonella heidelberg (strain SL476)</name>
    <dbReference type="NCBI Taxonomy" id="454169"/>
    <lineage>
        <taxon>Bacteria</taxon>
        <taxon>Pseudomonadati</taxon>
        <taxon>Pseudomonadota</taxon>
        <taxon>Gammaproteobacteria</taxon>
        <taxon>Enterobacterales</taxon>
        <taxon>Enterobacteriaceae</taxon>
        <taxon>Salmonella</taxon>
    </lineage>
</organism>
<comment type="function">
    <text evidence="1">Sequence-specific endonuclease that cleaves unmethylated GATC sequences. It is involved in DNA mismatch repair.</text>
</comment>
<comment type="subcellular location">
    <subcellularLocation>
        <location evidence="1">Cytoplasm</location>
    </subcellularLocation>
</comment>
<comment type="similarity">
    <text evidence="1">Belongs to the MutH family.</text>
</comment>
<reference key="1">
    <citation type="journal article" date="2011" name="J. Bacteriol.">
        <title>Comparative genomics of 28 Salmonella enterica isolates: evidence for CRISPR-mediated adaptive sublineage evolution.</title>
        <authorList>
            <person name="Fricke W.F."/>
            <person name="Mammel M.K."/>
            <person name="McDermott P.F."/>
            <person name="Tartera C."/>
            <person name="White D.G."/>
            <person name="Leclerc J.E."/>
            <person name="Ravel J."/>
            <person name="Cebula T.A."/>
        </authorList>
    </citation>
    <scope>NUCLEOTIDE SEQUENCE [LARGE SCALE GENOMIC DNA]</scope>
    <source>
        <strain>SL476</strain>
    </source>
</reference>
<accession>B4TGR0</accession>
<sequence>MSALCPLLTPPASEALLLAQARQLSGYTLGELAAMAGITTPKDLKRDKGWIGVLLEIWLGASAGSKPEQDFAALGVELKTIPVDSLGRPLETTFVCVAPLTGNSGVTWETSHVRHKLKRVLWVPVEGDRSIPLAERRVGSPLLWSPSEEEDRQLRLDWEELMDMIVLGQVERITARHGEVLQLRPKAANARALTEAIGARGEPILTLPRGFYLKKNFTQALLARHFLLQNP</sequence>
<name>MUTH_SALHS</name>
<feature type="chain" id="PRO_1000133473" description="DNA mismatch repair protein MutH">
    <location>
        <begin position="1"/>
        <end position="231"/>
    </location>
</feature>
<dbReference type="EMBL" id="CP001120">
    <property type="protein sequence ID" value="ACF67678.1"/>
    <property type="molecule type" value="Genomic_DNA"/>
</dbReference>
<dbReference type="RefSeq" id="WP_001274930.1">
    <property type="nucleotide sequence ID" value="NC_011083.1"/>
</dbReference>
<dbReference type="SMR" id="B4TGR0"/>
<dbReference type="KEGG" id="seh:SeHA_C3218"/>
<dbReference type="HOGENOM" id="CLU_086669_0_0_6"/>
<dbReference type="Proteomes" id="UP000001866">
    <property type="component" value="Chromosome"/>
</dbReference>
<dbReference type="GO" id="GO:0005737">
    <property type="term" value="C:cytoplasm"/>
    <property type="evidence" value="ECO:0007669"/>
    <property type="project" value="UniProtKB-SubCell"/>
</dbReference>
<dbReference type="GO" id="GO:0003677">
    <property type="term" value="F:DNA binding"/>
    <property type="evidence" value="ECO:0007669"/>
    <property type="project" value="InterPro"/>
</dbReference>
<dbReference type="GO" id="GO:0004519">
    <property type="term" value="F:endonuclease activity"/>
    <property type="evidence" value="ECO:0007669"/>
    <property type="project" value="UniProtKB-UniRule"/>
</dbReference>
<dbReference type="GO" id="GO:0006304">
    <property type="term" value="P:DNA modification"/>
    <property type="evidence" value="ECO:0007669"/>
    <property type="project" value="InterPro"/>
</dbReference>
<dbReference type="GO" id="GO:0006298">
    <property type="term" value="P:mismatch repair"/>
    <property type="evidence" value="ECO:0007669"/>
    <property type="project" value="UniProtKB-UniRule"/>
</dbReference>
<dbReference type="CDD" id="cd00583">
    <property type="entry name" value="MutH-like"/>
    <property type="match status" value="1"/>
</dbReference>
<dbReference type="FunFam" id="3.40.600.10:FF:000001">
    <property type="entry name" value="DNA mismatch repair protein MutH"/>
    <property type="match status" value="1"/>
</dbReference>
<dbReference type="Gene3D" id="3.40.600.10">
    <property type="entry name" value="DNA mismatch repair MutH/Restriction endonuclease, type II"/>
    <property type="match status" value="1"/>
</dbReference>
<dbReference type="HAMAP" id="MF_00759">
    <property type="entry name" value="MutH"/>
    <property type="match status" value="1"/>
</dbReference>
<dbReference type="InterPro" id="IPR004230">
    <property type="entry name" value="DNA_mismatch_repair_MutH"/>
</dbReference>
<dbReference type="InterPro" id="IPR011337">
    <property type="entry name" value="DNA_rep_MutH/RE_typeII_Sau3AI"/>
</dbReference>
<dbReference type="InterPro" id="IPR037057">
    <property type="entry name" value="DNA_rep_MutH/T2_RE_sf"/>
</dbReference>
<dbReference type="InterPro" id="IPR011335">
    <property type="entry name" value="Restrct_endonuc-II-like"/>
</dbReference>
<dbReference type="NCBIfam" id="TIGR02248">
    <property type="entry name" value="mutH_TIGR"/>
    <property type="match status" value="1"/>
</dbReference>
<dbReference type="NCBIfam" id="NF003458">
    <property type="entry name" value="PRK05070.1"/>
    <property type="match status" value="1"/>
</dbReference>
<dbReference type="Pfam" id="PF02976">
    <property type="entry name" value="MutH"/>
    <property type="match status" value="1"/>
</dbReference>
<dbReference type="SMART" id="SM00927">
    <property type="entry name" value="MutH"/>
    <property type="match status" value="1"/>
</dbReference>
<dbReference type="SUPFAM" id="SSF52980">
    <property type="entry name" value="Restriction endonuclease-like"/>
    <property type="match status" value="1"/>
</dbReference>
<proteinExistence type="inferred from homology"/>
<keyword id="KW-0963">Cytoplasm</keyword>
<keyword id="KW-0227">DNA damage</keyword>
<keyword id="KW-0234">DNA repair</keyword>
<keyword id="KW-0255">Endonuclease</keyword>
<keyword id="KW-0378">Hydrolase</keyword>
<keyword id="KW-0540">Nuclease</keyword>
<protein>
    <recommendedName>
        <fullName evidence="1">DNA mismatch repair protein MutH</fullName>
    </recommendedName>
    <alternativeName>
        <fullName evidence="1">Methyl-directed mismatch repair protein</fullName>
    </alternativeName>
</protein>
<gene>
    <name evidence="1" type="primary">mutH</name>
    <name type="ordered locus">SeHA_C3218</name>
</gene>